<organism>
    <name type="scientific">Arabidopsis thaliana</name>
    <name type="common">Mouse-ear cress</name>
    <dbReference type="NCBI Taxonomy" id="3702"/>
    <lineage>
        <taxon>Eukaryota</taxon>
        <taxon>Viridiplantae</taxon>
        <taxon>Streptophyta</taxon>
        <taxon>Embryophyta</taxon>
        <taxon>Tracheophyta</taxon>
        <taxon>Spermatophyta</taxon>
        <taxon>Magnoliopsida</taxon>
        <taxon>eudicotyledons</taxon>
        <taxon>Gunneridae</taxon>
        <taxon>Pentapetalae</taxon>
        <taxon>rosids</taxon>
        <taxon>malvids</taxon>
        <taxon>Brassicales</taxon>
        <taxon>Brassicaceae</taxon>
        <taxon>Camelineae</taxon>
        <taxon>Arabidopsis</taxon>
    </lineage>
</organism>
<accession>Q6R8G3</accession>
<accession>Q9LQX9</accession>
<keyword id="KW-1003">Cell membrane</keyword>
<keyword id="KW-0472">Membrane</keyword>
<keyword id="KW-0592">Phosphate transport</keyword>
<keyword id="KW-1185">Reference proteome</keyword>
<keyword id="KW-0812">Transmembrane</keyword>
<keyword id="KW-1133">Transmembrane helix</keyword>
<keyword id="KW-0813">Transport</keyword>
<proteinExistence type="evidence at transcript level"/>
<protein>
    <recommendedName>
        <fullName>Phosphate transporter PHO1 homolog 7</fullName>
    </recommendedName>
    <alternativeName>
        <fullName>Protein PHO1 homolog 7</fullName>
        <shortName>AtPHO1;H7</shortName>
    </alternativeName>
</protein>
<dbReference type="EMBL" id="AY507959">
    <property type="protein sequence ID" value="AAR99489.1"/>
    <property type="molecule type" value="mRNA"/>
</dbReference>
<dbReference type="EMBL" id="AC006535">
    <property type="protein sequence ID" value="AAF87029.1"/>
    <property type="status" value="ALT_SEQ"/>
    <property type="molecule type" value="Genomic_DNA"/>
</dbReference>
<dbReference type="EMBL" id="CP002684">
    <property type="protein sequence ID" value="AEE30725.1"/>
    <property type="molecule type" value="Genomic_DNA"/>
</dbReference>
<dbReference type="RefSeq" id="NP_173995.1">
    <property type="nucleotide sequence ID" value="NM_102436.2"/>
</dbReference>
<dbReference type="SMR" id="Q6R8G3"/>
<dbReference type="BioGRID" id="24450">
    <property type="interactions" value="1"/>
</dbReference>
<dbReference type="FunCoup" id="Q6R8G3">
    <property type="interactions" value="2614"/>
</dbReference>
<dbReference type="STRING" id="3702.Q6R8G3"/>
<dbReference type="iPTMnet" id="Q6R8G3"/>
<dbReference type="PaxDb" id="3702-AT1G26730.1"/>
<dbReference type="ProteomicsDB" id="235081"/>
<dbReference type="EnsemblPlants" id="AT1G26730.1">
    <property type="protein sequence ID" value="AT1G26730.1"/>
    <property type="gene ID" value="AT1G26730"/>
</dbReference>
<dbReference type="GeneID" id="839214"/>
<dbReference type="Gramene" id="AT1G26730.1">
    <property type="protein sequence ID" value="AT1G26730.1"/>
    <property type="gene ID" value="AT1G26730"/>
</dbReference>
<dbReference type="KEGG" id="ath:AT1G26730"/>
<dbReference type="Araport" id="AT1G26730"/>
<dbReference type="TAIR" id="AT1G26730"/>
<dbReference type="eggNOG" id="KOG1162">
    <property type="taxonomic scope" value="Eukaryota"/>
</dbReference>
<dbReference type="HOGENOM" id="CLU_006116_2_0_1"/>
<dbReference type="InParanoid" id="Q6R8G3"/>
<dbReference type="OMA" id="NNIIPEW"/>
<dbReference type="PhylomeDB" id="Q6R8G3"/>
<dbReference type="PRO" id="PR:Q6R8G3"/>
<dbReference type="Proteomes" id="UP000006548">
    <property type="component" value="Chromosome 1"/>
</dbReference>
<dbReference type="ExpressionAtlas" id="Q6R8G3">
    <property type="expression patterns" value="baseline and differential"/>
</dbReference>
<dbReference type="GO" id="GO:0005886">
    <property type="term" value="C:plasma membrane"/>
    <property type="evidence" value="ECO:0007669"/>
    <property type="project" value="UniProtKB-SubCell"/>
</dbReference>
<dbReference type="GO" id="GO:0006817">
    <property type="term" value="P:phosphate ion transport"/>
    <property type="evidence" value="ECO:0007669"/>
    <property type="project" value="UniProtKB-KW"/>
</dbReference>
<dbReference type="CDD" id="cd14476">
    <property type="entry name" value="SPX_PHO1_like"/>
    <property type="match status" value="1"/>
</dbReference>
<dbReference type="InterPro" id="IPR004342">
    <property type="entry name" value="EXS_C"/>
</dbReference>
<dbReference type="InterPro" id="IPR034092">
    <property type="entry name" value="PHO1_SPX"/>
</dbReference>
<dbReference type="InterPro" id="IPR004331">
    <property type="entry name" value="SPX_dom"/>
</dbReference>
<dbReference type="PANTHER" id="PTHR10783:SF98">
    <property type="entry name" value="PHOSPHATE TRANSPORTER PHO1 HOMOLOG 7-RELATED"/>
    <property type="match status" value="1"/>
</dbReference>
<dbReference type="PANTHER" id="PTHR10783">
    <property type="entry name" value="XENOTROPIC AND POLYTROPIC RETROVIRUS RECEPTOR 1-RELATED"/>
    <property type="match status" value="1"/>
</dbReference>
<dbReference type="Pfam" id="PF03124">
    <property type="entry name" value="EXS"/>
    <property type="match status" value="1"/>
</dbReference>
<dbReference type="Pfam" id="PF03105">
    <property type="entry name" value="SPX"/>
    <property type="match status" value="1"/>
</dbReference>
<dbReference type="PROSITE" id="PS51380">
    <property type="entry name" value="EXS"/>
    <property type="match status" value="1"/>
</dbReference>
<dbReference type="PROSITE" id="PS51382">
    <property type="entry name" value="SPX"/>
    <property type="match status" value="1"/>
</dbReference>
<comment type="function">
    <text evidence="1">May transport inorganic phosphate (Pi).</text>
</comment>
<comment type="subcellular location">
    <subcellularLocation>
        <location evidence="6">Cell membrane</location>
        <topology evidence="6">Multi-pass membrane protein</topology>
    </subcellularLocation>
</comment>
<comment type="tissue specificity">
    <text evidence="5">Expressed in root tips, vascular cylinders of roots and filaments, leaf hydathodes, stem, receptacle and stigma apex.</text>
</comment>
<comment type="induction">
    <text evidence="5">Not induced by Pi deficiency.</text>
</comment>
<comment type="similarity">
    <text evidence="6">Belongs to the SYG1 (TC 2.A.94) family.</text>
</comment>
<comment type="sequence caution" evidence="6">
    <conflict type="erroneous gene model prediction">
        <sequence resource="EMBL-CDS" id="AAF87029"/>
    </conflict>
</comment>
<gene>
    <name type="primary">PHO1-H7</name>
    <name type="ordered locus">At1g26730</name>
    <name type="ORF">T24P13.11</name>
</gene>
<reference key="1">
    <citation type="journal article" date="2004" name="Plant Physiol.">
        <title>Structure and expression profile of the Arabidopsis PHO1 gene family indicates a broad role in inorganic phosphate homeostasis.</title>
        <authorList>
            <person name="Wang Y."/>
            <person name="Ribot C."/>
            <person name="Rezzonico E."/>
            <person name="Poirier Y."/>
        </authorList>
    </citation>
    <scope>NUCLEOTIDE SEQUENCE [MRNA]</scope>
    <scope>TISSUE SPECIFICITY</scope>
    <scope>INDUCTION</scope>
    <scope>GENE FAMILY</scope>
    <scope>NOMENCLATURE</scope>
</reference>
<reference key="2">
    <citation type="journal article" date="2000" name="Nature">
        <title>Sequence and analysis of chromosome 1 of the plant Arabidopsis thaliana.</title>
        <authorList>
            <person name="Theologis A."/>
            <person name="Ecker J.R."/>
            <person name="Palm C.J."/>
            <person name="Federspiel N.A."/>
            <person name="Kaul S."/>
            <person name="White O."/>
            <person name="Alonso J."/>
            <person name="Altafi H."/>
            <person name="Araujo R."/>
            <person name="Bowman C.L."/>
            <person name="Brooks S.Y."/>
            <person name="Buehler E."/>
            <person name="Chan A."/>
            <person name="Chao Q."/>
            <person name="Chen H."/>
            <person name="Cheuk R.F."/>
            <person name="Chin C.W."/>
            <person name="Chung M.K."/>
            <person name="Conn L."/>
            <person name="Conway A.B."/>
            <person name="Conway A.R."/>
            <person name="Creasy T.H."/>
            <person name="Dewar K."/>
            <person name="Dunn P."/>
            <person name="Etgu P."/>
            <person name="Feldblyum T.V."/>
            <person name="Feng J.-D."/>
            <person name="Fong B."/>
            <person name="Fujii C.Y."/>
            <person name="Gill J.E."/>
            <person name="Goldsmith A.D."/>
            <person name="Haas B."/>
            <person name="Hansen N.F."/>
            <person name="Hughes B."/>
            <person name="Huizar L."/>
            <person name="Hunter J.L."/>
            <person name="Jenkins J."/>
            <person name="Johnson-Hopson C."/>
            <person name="Khan S."/>
            <person name="Khaykin E."/>
            <person name="Kim C.J."/>
            <person name="Koo H.L."/>
            <person name="Kremenetskaia I."/>
            <person name="Kurtz D.B."/>
            <person name="Kwan A."/>
            <person name="Lam B."/>
            <person name="Langin-Hooper S."/>
            <person name="Lee A."/>
            <person name="Lee J.M."/>
            <person name="Lenz C.A."/>
            <person name="Li J.H."/>
            <person name="Li Y.-P."/>
            <person name="Lin X."/>
            <person name="Liu S.X."/>
            <person name="Liu Z.A."/>
            <person name="Luros J.S."/>
            <person name="Maiti R."/>
            <person name="Marziali A."/>
            <person name="Militscher J."/>
            <person name="Miranda M."/>
            <person name="Nguyen M."/>
            <person name="Nierman W.C."/>
            <person name="Osborne B.I."/>
            <person name="Pai G."/>
            <person name="Peterson J."/>
            <person name="Pham P.K."/>
            <person name="Rizzo M."/>
            <person name="Rooney T."/>
            <person name="Rowley D."/>
            <person name="Sakano H."/>
            <person name="Salzberg S.L."/>
            <person name="Schwartz J.R."/>
            <person name="Shinn P."/>
            <person name="Southwick A.M."/>
            <person name="Sun H."/>
            <person name="Tallon L.J."/>
            <person name="Tambunga G."/>
            <person name="Toriumi M.J."/>
            <person name="Town C.D."/>
            <person name="Utterback T."/>
            <person name="Van Aken S."/>
            <person name="Vaysberg M."/>
            <person name="Vysotskaia V.S."/>
            <person name="Walker M."/>
            <person name="Wu D."/>
            <person name="Yu G."/>
            <person name="Fraser C.M."/>
            <person name="Venter J.C."/>
            <person name="Davis R.W."/>
        </authorList>
    </citation>
    <scope>NUCLEOTIDE SEQUENCE [LARGE SCALE GENOMIC DNA]</scope>
    <source>
        <strain>cv. Columbia</strain>
    </source>
</reference>
<reference key="3">
    <citation type="journal article" date="2017" name="Plant J.">
        <title>Araport11: a complete reannotation of the Arabidopsis thaliana reference genome.</title>
        <authorList>
            <person name="Cheng C.Y."/>
            <person name="Krishnakumar V."/>
            <person name="Chan A.P."/>
            <person name="Thibaud-Nissen F."/>
            <person name="Schobel S."/>
            <person name="Town C.D."/>
        </authorList>
    </citation>
    <scope>GENOME REANNOTATION</scope>
    <source>
        <strain>cv. Columbia</strain>
    </source>
</reference>
<sequence length="750" mass="87333">MKFGKDFVRQMIPEWQQAYMDYAGLKSILQEIQTSRKRSERPGILKRKLSGSRNFSGLTKRYSRTASTREPEIQDILVHATTGDDGFERYETTILEVAEAGRESELAFFKTLDLEFDKVNHFYRSKVEEMVKEAVVLNKQMDALIAFRIKVERPSSSWSCSETVSVDMNALDSNDQRNTLAEEMGIRVEGNGSNGGDSTKESVPQVLSVLERIRLNKTQETPLSTIKNVLKLSNQEELKFTRENLKKIEERLKNVFIEFYRKLRHLKNYSFLNTLAISKIMKKYDKIASRSAAKPYMEMVDKSYLTSSDEINKLMLRVESTFVEHFAGLNRSKGMNLLRPKVKKEKHRITFSTGFFVGCTVSLVVALVMFIHARNIMGAVGHKVYMETMFPLYSLFAFVVLHMIMYASNIYFWKRYRVNYPFIFGFKEGTELGYRHVLLLSFGLGTLALCAVLINLDMEMDPNTNDYKTMTELLPMFILALVVAILFCPFNIFYRSSRVFFLMVVFRCIAAPLYKVNLPDFFLADQLTSQVQALRSLEFYICYYGWGDFKHRQNTCRSSDVYSTFYFIVAVIPYWSRFLQCVRRLIEENDSSQGYNALKYLLTVVAVCLRTAYSFNRGNIWKISAWVFSALATFYGTYWDIVFDWGLLHRPSKHLLREKLLVPHKAVYYVAIVLNIVLRMAWLQTVLDFNLSFLHRETMIALLAALEIIRRGIWNFFRLENEHLNNVGKFRAFKSVPLPFNYNEEEDRDS</sequence>
<evidence type="ECO:0000250" key="1"/>
<evidence type="ECO:0000255" key="2"/>
<evidence type="ECO:0000255" key="3">
    <source>
        <dbReference type="PROSITE-ProRule" id="PRU00712"/>
    </source>
</evidence>
<evidence type="ECO:0000255" key="4">
    <source>
        <dbReference type="PROSITE-ProRule" id="PRU00714"/>
    </source>
</evidence>
<evidence type="ECO:0000269" key="5">
    <source>
    </source>
</evidence>
<evidence type="ECO:0000305" key="6"/>
<name>PHO17_ARATH</name>
<feature type="chain" id="PRO_0000398161" description="Phosphate transporter PHO1 homolog 7">
    <location>
        <begin position="1"/>
        <end position="750"/>
    </location>
</feature>
<feature type="topological domain" description="Cytoplasmic" evidence="2">
    <location>
        <begin position="1"/>
        <end position="350"/>
    </location>
</feature>
<feature type="transmembrane region" description="Helical" evidence="2">
    <location>
        <begin position="351"/>
        <end position="371"/>
    </location>
</feature>
<feature type="topological domain" description="Extracellular" evidence="2">
    <location>
        <begin position="372"/>
        <end position="391"/>
    </location>
</feature>
<feature type="transmembrane region" description="Helical" evidence="2">
    <location>
        <begin position="392"/>
        <end position="412"/>
    </location>
</feature>
<feature type="topological domain" description="Cytoplasmic" evidence="2">
    <location>
        <begin position="413"/>
        <end position="435"/>
    </location>
</feature>
<feature type="transmembrane region" description="Helical" evidence="2">
    <location>
        <begin position="436"/>
        <end position="456"/>
    </location>
</feature>
<feature type="topological domain" description="Extracellular" evidence="2">
    <location>
        <begin position="457"/>
        <end position="472"/>
    </location>
</feature>
<feature type="transmembrane region" description="Helical" evidence="2">
    <location>
        <begin position="473"/>
        <end position="493"/>
    </location>
</feature>
<feature type="topological domain" description="Cytoplasmic" evidence="2">
    <location>
        <begin position="494"/>
        <end position="622"/>
    </location>
</feature>
<feature type="transmembrane region" description="Helical" evidence="2">
    <location>
        <begin position="623"/>
        <end position="643"/>
    </location>
</feature>
<feature type="topological domain" description="Extracellular" evidence="2">
    <location>
        <begin position="644"/>
        <end position="666"/>
    </location>
</feature>
<feature type="transmembrane region" description="Helical" evidence="2">
    <location>
        <begin position="667"/>
        <end position="687"/>
    </location>
</feature>
<feature type="topological domain" description="Cytoplasmic" evidence="2">
    <location>
        <begin position="688"/>
        <end position="750"/>
    </location>
</feature>
<feature type="domain" description="SPX" evidence="4">
    <location>
        <begin position="1"/>
        <end position="298"/>
    </location>
</feature>
<feature type="domain" description="EXS" evidence="3">
    <location>
        <begin position="557"/>
        <end position="750"/>
    </location>
</feature>